<protein>
    <recommendedName>
        <fullName evidence="1">Elongation factor 4</fullName>
        <shortName evidence="1">EF-4</shortName>
        <ecNumber evidence="1">3.6.5.n1</ecNumber>
    </recommendedName>
    <alternativeName>
        <fullName evidence="1">Ribosomal back-translocase LepA</fullName>
    </alternativeName>
</protein>
<keyword id="KW-0997">Cell inner membrane</keyword>
<keyword id="KW-1003">Cell membrane</keyword>
<keyword id="KW-0342">GTP-binding</keyword>
<keyword id="KW-0378">Hydrolase</keyword>
<keyword id="KW-0472">Membrane</keyword>
<keyword id="KW-0547">Nucleotide-binding</keyword>
<keyword id="KW-0648">Protein biosynthesis</keyword>
<keyword id="KW-1185">Reference proteome</keyword>
<sequence>MTDAPVSRLRNFCIIAHIDHGKSTLADRLLQDTGTVADRDMQAQFLDNMDLERERGITIKLQAARMQFKAADGELYTLNLIDTPGHVDFSYEVSRSLQACEGALLVVDASQGVEAQTLANVYLALGNDLEIIPVLNKIDLPGADAERISTEIEEIIGLDTSNAIHCSAKTGLGVPEILQAIVDRVPAPPDTTEEPLKALIFDSYYDPYRGVIVYFRVVSGRLRKKDKVLLMASKKTYELDEIGVMSPDQKQVDELHAGEVGYLAASIKAVADARVGDTITLASAPAEEPLPGYTEAKPMVFCGLFPTDADQYPDLRDALDKLKLSDAALKYEPETSSAMGFGFRCGFLGLLHMEIVQERLEREYDLDLIVTAPSVIYKVNMADGSTVMVDNPATLPEPQARESIEEPYVKMEIYAPNSFNGTLMELCQERRGTFIDMKYITTDRVTLQYELPLAEVVTDFFDQMKSRTKGYASMEYSLIGYRQNVLVRLDVLINGDKADPLTTIVHRDKAYGVGKGLVEKLKELIPRQQFKIPLQASIGSRIIASESISAMRKDVLAKCYGGDISRKKKLLKKQAKGKKRMKAMGKVDVPQEAFMAVLKLNENK</sequence>
<feature type="chain" id="PRO_1000032066" description="Elongation factor 4">
    <location>
        <begin position="1"/>
        <end position="604"/>
    </location>
</feature>
<feature type="domain" description="tr-type G">
    <location>
        <begin position="7"/>
        <end position="190"/>
    </location>
</feature>
<feature type="binding site" evidence="1">
    <location>
        <begin position="19"/>
        <end position="24"/>
    </location>
    <ligand>
        <name>GTP</name>
        <dbReference type="ChEBI" id="CHEBI:37565"/>
    </ligand>
</feature>
<feature type="binding site" evidence="1">
    <location>
        <begin position="136"/>
        <end position="139"/>
    </location>
    <ligand>
        <name>GTP</name>
        <dbReference type="ChEBI" id="CHEBI:37565"/>
    </ligand>
</feature>
<accession>A5GRE6</accession>
<gene>
    <name evidence="1" type="primary">lepA</name>
    <name type="ordered locus">SynRCC307_0552</name>
</gene>
<dbReference type="EC" id="3.6.5.n1" evidence="1"/>
<dbReference type="EMBL" id="CT978603">
    <property type="protein sequence ID" value="CAK27455.1"/>
    <property type="molecule type" value="Genomic_DNA"/>
</dbReference>
<dbReference type="SMR" id="A5GRE6"/>
<dbReference type="STRING" id="316278.SynRCC307_0552"/>
<dbReference type="KEGG" id="syr:SynRCC307_0552"/>
<dbReference type="eggNOG" id="COG0481">
    <property type="taxonomic scope" value="Bacteria"/>
</dbReference>
<dbReference type="HOGENOM" id="CLU_009995_3_3_3"/>
<dbReference type="OrthoDB" id="580826at2"/>
<dbReference type="Proteomes" id="UP000001115">
    <property type="component" value="Chromosome"/>
</dbReference>
<dbReference type="GO" id="GO:0005886">
    <property type="term" value="C:plasma membrane"/>
    <property type="evidence" value="ECO:0007669"/>
    <property type="project" value="UniProtKB-SubCell"/>
</dbReference>
<dbReference type="GO" id="GO:0005525">
    <property type="term" value="F:GTP binding"/>
    <property type="evidence" value="ECO:0007669"/>
    <property type="project" value="UniProtKB-KW"/>
</dbReference>
<dbReference type="GO" id="GO:0003924">
    <property type="term" value="F:GTPase activity"/>
    <property type="evidence" value="ECO:0007669"/>
    <property type="project" value="InterPro"/>
</dbReference>
<dbReference type="GO" id="GO:0043022">
    <property type="term" value="F:ribosome binding"/>
    <property type="evidence" value="ECO:0007669"/>
    <property type="project" value="TreeGrafter"/>
</dbReference>
<dbReference type="GO" id="GO:0045727">
    <property type="term" value="P:positive regulation of translation"/>
    <property type="evidence" value="ECO:0007669"/>
    <property type="project" value="TreeGrafter"/>
</dbReference>
<dbReference type="GO" id="GO:0006412">
    <property type="term" value="P:translation"/>
    <property type="evidence" value="ECO:0007669"/>
    <property type="project" value="UniProtKB-KW"/>
</dbReference>
<dbReference type="CDD" id="cd03699">
    <property type="entry name" value="EF4_II"/>
    <property type="match status" value="1"/>
</dbReference>
<dbReference type="CDD" id="cd16260">
    <property type="entry name" value="EF4_III"/>
    <property type="match status" value="1"/>
</dbReference>
<dbReference type="CDD" id="cd01890">
    <property type="entry name" value="LepA"/>
    <property type="match status" value="1"/>
</dbReference>
<dbReference type="CDD" id="cd03709">
    <property type="entry name" value="lepA_C"/>
    <property type="match status" value="1"/>
</dbReference>
<dbReference type="FunFam" id="3.40.50.300:FF:000078">
    <property type="entry name" value="Elongation factor 4"/>
    <property type="match status" value="1"/>
</dbReference>
<dbReference type="FunFam" id="2.40.30.10:FF:000015">
    <property type="entry name" value="Translation factor GUF1, mitochondrial"/>
    <property type="match status" value="1"/>
</dbReference>
<dbReference type="FunFam" id="3.30.70.240:FF:000007">
    <property type="entry name" value="Translation factor GUF1, mitochondrial"/>
    <property type="match status" value="1"/>
</dbReference>
<dbReference type="FunFam" id="3.30.70.2570:FF:000001">
    <property type="entry name" value="Translation factor GUF1, mitochondrial"/>
    <property type="match status" value="1"/>
</dbReference>
<dbReference type="FunFam" id="3.30.70.870:FF:000004">
    <property type="entry name" value="Translation factor GUF1, mitochondrial"/>
    <property type="match status" value="1"/>
</dbReference>
<dbReference type="Gene3D" id="3.30.70.240">
    <property type="match status" value="1"/>
</dbReference>
<dbReference type="Gene3D" id="3.30.70.2570">
    <property type="entry name" value="Elongation factor 4, C-terminal domain"/>
    <property type="match status" value="1"/>
</dbReference>
<dbReference type="Gene3D" id="3.30.70.870">
    <property type="entry name" value="Elongation Factor G (Translational Gtpase), domain 3"/>
    <property type="match status" value="1"/>
</dbReference>
<dbReference type="Gene3D" id="3.40.50.300">
    <property type="entry name" value="P-loop containing nucleotide triphosphate hydrolases"/>
    <property type="match status" value="1"/>
</dbReference>
<dbReference type="Gene3D" id="2.40.30.10">
    <property type="entry name" value="Translation factors"/>
    <property type="match status" value="1"/>
</dbReference>
<dbReference type="HAMAP" id="MF_03138">
    <property type="entry name" value="GUFP"/>
    <property type="match status" value="1"/>
</dbReference>
<dbReference type="HAMAP" id="MF_00071">
    <property type="entry name" value="LepA"/>
    <property type="match status" value="1"/>
</dbReference>
<dbReference type="InterPro" id="IPR006297">
    <property type="entry name" value="EF-4"/>
</dbReference>
<dbReference type="InterPro" id="IPR035647">
    <property type="entry name" value="EFG_III/V"/>
</dbReference>
<dbReference type="InterPro" id="IPR000640">
    <property type="entry name" value="EFG_V-like"/>
</dbReference>
<dbReference type="InterPro" id="IPR004161">
    <property type="entry name" value="EFTu-like_2"/>
</dbReference>
<dbReference type="InterPro" id="IPR031157">
    <property type="entry name" value="G_TR_CS"/>
</dbReference>
<dbReference type="InterPro" id="IPR027518">
    <property type="entry name" value="GUFP"/>
</dbReference>
<dbReference type="InterPro" id="IPR038363">
    <property type="entry name" value="LepA_C_sf"/>
</dbReference>
<dbReference type="InterPro" id="IPR013842">
    <property type="entry name" value="LepA_CTD"/>
</dbReference>
<dbReference type="InterPro" id="IPR035654">
    <property type="entry name" value="LepA_IV"/>
</dbReference>
<dbReference type="InterPro" id="IPR027417">
    <property type="entry name" value="P-loop_NTPase"/>
</dbReference>
<dbReference type="InterPro" id="IPR005225">
    <property type="entry name" value="Small_GTP-bd"/>
</dbReference>
<dbReference type="InterPro" id="IPR000795">
    <property type="entry name" value="T_Tr_GTP-bd_dom"/>
</dbReference>
<dbReference type="InterPro" id="IPR009000">
    <property type="entry name" value="Transl_B-barrel_sf"/>
</dbReference>
<dbReference type="NCBIfam" id="TIGR01393">
    <property type="entry name" value="lepA"/>
    <property type="match status" value="1"/>
</dbReference>
<dbReference type="NCBIfam" id="TIGR00231">
    <property type="entry name" value="small_GTP"/>
    <property type="match status" value="1"/>
</dbReference>
<dbReference type="PANTHER" id="PTHR43512:SF4">
    <property type="entry name" value="TRANSLATION FACTOR GUF1 HOMOLOG, CHLOROPLASTIC"/>
    <property type="match status" value="1"/>
</dbReference>
<dbReference type="PANTHER" id="PTHR43512">
    <property type="entry name" value="TRANSLATION FACTOR GUF1-RELATED"/>
    <property type="match status" value="1"/>
</dbReference>
<dbReference type="Pfam" id="PF00679">
    <property type="entry name" value="EFG_C"/>
    <property type="match status" value="1"/>
</dbReference>
<dbReference type="Pfam" id="PF00009">
    <property type="entry name" value="GTP_EFTU"/>
    <property type="match status" value="1"/>
</dbReference>
<dbReference type="Pfam" id="PF03144">
    <property type="entry name" value="GTP_EFTU_D2"/>
    <property type="match status" value="1"/>
</dbReference>
<dbReference type="Pfam" id="PF06421">
    <property type="entry name" value="LepA_C"/>
    <property type="match status" value="1"/>
</dbReference>
<dbReference type="PRINTS" id="PR00315">
    <property type="entry name" value="ELONGATNFCT"/>
</dbReference>
<dbReference type="SUPFAM" id="SSF54980">
    <property type="entry name" value="EF-G C-terminal domain-like"/>
    <property type="match status" value="2"/>
</dbReference>
<dbReference type="SUPFAM" id="SSF52540">
    <property type="entry name" value="P-loop containing nucleoside triphosphate hydrolases"/>
    <property type="match status" value="1"/>
</dbReference>
<dbReference type="SUPFAM" id="SSF50447">
    <property type="entry name" value="Translation proteins"/>
    <property type="match status" value="1"/>
</dbReference>
<dbReference type="PROSITE" id="PS00301">
    <property type="entry name" value="G_TR_1"/>
    <property type="match status" value="1"/>
</dbReference>
<dbReference type="PROSITE" id="PS51722">
    <property type="entry name" value="G_TR_2"/>
    <property type="match status" value="1"/>
</dbReference>
<organism>
    <name type="scientific">Synechococcus sp. (strain RCC307)</name>
    <dbReference type="NCBI Taxonomy" id="316278"/>
    <lineage>
        <taxon>Bacteria</taxon>
        <taxon>Bacillati</taxon>
        <taxon>Cyanobacteriota</taxon>
        <taxon>Cyanophyceae</taxon>
        <taxon>Synechococcales</taxon>
        <taxon>Synechococcaceae</taxon>
        <taxon>Synechococcus</taxon>
    </lineage>
</organism>
<comment type="function">
    <text evidence="1">Required for accurate and efficient protein synthesis under certain stress conditions. May act as a fidelity factor of the translation reaction, by catalyzing a one-codon backward translocation of tRNAs on improperly translocated ribosomes. Back-translocation proceeds from a post-translocation (POST) complex to a pre-translocation (PRE) complex, thus giving elongation factor G a second chance to translocate the tRNAs correctly. Binds to ribosomes in a GTP-dependent manner.</text>
</comment>
<comment type="catalytic activity">
    <reaction evidence="1">
        <text>GTP + H2O = GDP + phosphate + H(+)</text>
        <dbReference type="Rhea" id="RHEA:19669"/>
        <dbReference type="ChEBI" id="CHEBI:15377"/>
        <dbReference type="ChEBI" id="CHEBI:15378"/>
        <dbReference type="ChEBI" id="CHEBI:37565"/>
        <dbReference type="ChEBI" id="CHEBI:43474"/>
        <dbReference type="ChEBI" id="CHEBI:58189"/>
        <dbReference type="EC" id="3.6.5.n1"/>
    </reaction>
</comment>
<comment type="subcellular location">
    <subcellularLocation>
        <location evidence="1">Cell inner membrane</location>
        <topology evidence="1">Peripheral membrane protein</topology>
        <orientation evidence="1">Cytoplasmic side</orientation>
    </subcellularLocation>
</comment>
<comment type="similarity">
    <text evidence="1">Belongs to the TRAFAC class translation factor GTPase superfamily. Classic translation factor GTPase family. LepA subfamily.</text>
</comment>
<name>LEPA_SYNR3</name>
<proteinExistence type="inferred from homology"/>
<reference key="1">
    <citation type="submission" date="2006-05" db="EMBL/GenBank/DDBJ databases">
        <authorList>
            <consortium name="Genoscope"/>
        </authorList>
    </citation>
    <scope>NUCLEOTIDE SEQUENCE [LARGE SCALE GENOMIC DNA]</scope>
    <source>
        <strain>RCC307</strain>
    </source>
</reference>
<evidence type="ECO:0000255" key="1">
    <source>
        <dbReference type="HAMAP-Rule" id="MF_00071"/>
    </source>
</evidence>